<proteinExistence type="inferred from homology"/>
<feature type="chain" id="PRO_1000096785" description="Phosphopantetheine adenylyltransferase">
    <location>
        <begin position="1"/>
        <end position="161"/>
    </location>
</feature>
<feature type="binding site" evidence="1">
    <location>
        <begin position="9"/>
        <end position="10"/>
    </location>
    <ligand>
        <name>ATP</name>
        <dbReference type="ChEBI" id="CHEBI:30616"/>
    </ligand>
</feature>
<feature type="binding site" evidence="1">
    <location>
        <position position="9"/>
    </location>
    <ligand>
        <name>substrate</name>
    </ligand>
</feature>
<feature type="binding site" evidence="1">
    <location>
        <position position="17"/>
    </location>
    <ligand>
        <name>ATP</name>
        <dbReference type="ChEBI" id="CHEBI:30616"/>
    </ligand>
</feature>
<feature type="binding site" evidence="1">
    <location>
        <position position="41"/>
    </location>
    <ligand>
        <name>substrate</name>
    </ligand>
</feature>
<feature type="binding site" evidence="1">
    <location>
        <position position="73"/>
    </location>
    <ligand>
        <name>substrate</name>
    </ligand>
</feature>
<feature type="binding site" evidence="1">
    <location>
        <position position="87"/>
    </location>
    <ligand>
        <name>substrate</name>
    </ligand>
</feature>
<feature type="binding site" evidence="1">
    <location>
        <begin position="88"/>
        <end position="90"/>
    </location>
    <ligand>
        <name>ATP</name>
        <dbReference type="ChEBI" id="CHEBI:30616"/>
    </ligand>
</feature>
<feature type="binding site" evidence="1">
    <location>
        <position position="98"/>
    </location>
    <ligand>
        <name>ATP</name>
        <dbReference type="ChEBI" id="CHEBI:30616"/>
    </ligand>
</feature>
<feature type="binding site" evidence="1">
    <location>
        <begin position="123"/>
        <end position="129"/>
    </location>
    <ligand>
        <name>ATP</name>
        <dbReference type="ChEBI" id="CHEBI:30616"/>
    </ligand>
</feature>
<feature type="site" description="Transition state stabilizer" evidence="1">
    <location>
        <position position="17"/>
    </location>
</feature>
<gene>
    <name evidence="1" type="primary">coaD</name>
    <name type="ordered locus">RALTA_A0312</name>
</gene>
<organism>
    <name type="scientific">Cupriavidus taiwanensis (strain DSM 17343 / BCRC 17206 / CCUG 44338 / CIP 107171 / LMG 19424 / R1)</name>
    <name type="common">Ralstonia taiwanensis (strain LMG 19424)</name>
    <dbReference type="NCBI Taxonomy" id="977880"/>
    <lineage>
        <taxon>Bacteria</taxon>
        <taxon>Pseudomonadati</taxon>
        <taxon>Pseudomonadota</taxon>
        <taxon>Betaproteobacteria</taxon>
        <taxon>Burkholderiales</taxon>
        <taxon>Burkholderiaceae</taxon>
        <taxon>Cupriavidus</taxon>
    </lineage>
</organism>
<sequence>MVSAVYPGTFDPMTRGHEDLVRRASNIFDELVVGVAHSPNKRPFFSLEERISIAREVLGHYPNVRVEGFSGLLKDFVRKNNARVIVRGLRAVSDFEYEFQMAGMNRYLLPDVETMFLTPSDQYQFISGTFVREIAVLGGDVSKFVFPSVERWLQEKIAKPE</sequence>
<protein>
    <recommendedName>
        <fullName evidence="1">Phosphopantetheine adenylyltransferase</fullName>
        <ecNumber evidence="1">2.7.7.3</ecNumber>
    </recommendedName>
    <alternativeName>
        <fullName evidence="1">Dephospho-CoA pyrophosphorylase</fullName>
    </alternativeName>
    <alternativeName>
        <fullName evidence="1">Pantetheine-phosphate adenylyltransferase</fullName>
        <shortName evidence="1">PPAT</shortName>
    </alternativeName>
</protein>
<comment type="function">
    <text evidence="1">Reversibly transfers an adenylyl group from ATP to 4'-phosphopantetheine, yielding dephospho-CoA (dPCoA) and pyrophosphate.</text>
</comment>
<comment type="catalytic activity">
    <reaction evidence="1">
        <text>(R)-4'-phosphopantetheine + ATP + H(+) = 3'-dephospho-CoA + diphosphate</text>
        <dbReference type="Rhea" id="RHEA:19801"/>
        <dbReference type="ChEBI" id="CHEBI:15378"/>
        <dbReference type="ChEBI" id="CHEBI:30616"/>
        <dbReference type="ChEBI" id="CHEBI:33019"/>
        <dbReference type="ChEBI" id="CHEBI:57328"/>
        <dbReference type="ChEBI" id="CHEBI:61723"/>
        <dbReference type="EC" id="2.7.7.3"/>
    </reaction>
</comment>
<comment type="cofactor">
    <cofactor evidence="1">
        <name>Mg(2+)</name>
        <dbReference type="ChEBI" id="CHEBI:18420"/>
    </cofactor>
</comment>
<comment type="pathway">
    <text evidence="1">Cofactor biosynthesis; coenzyme A biosynthesis; CoA from (R)-pantothenate: step 4/5.</text>
</comment>
<comment type="subunit">
    <text evidence="1">Homohexamer.</text>
</comment>
<comment type="subcellular location">
    <subcellularLocation>
        <location evidence="1">Cytoplasm</location>
    </subcellularLocation>
</comment>
<comment type="similarity">
    <text evidence="1">Belongs to the bacterial CoaD family.</text>
</comment>
<dbReference type="EC" id="2.7.7.3" evidence="1"/>
<dbReference type="EMBL" id="CU633749">
    <property type="protein sequence ID" value="CAP62982.1"/>
    <property type="molecule type" value="Genomic_DNA"/>
</dbReference>
<dbReference type="RefSeq" id="WP_012351649.1">
    <property type="nucleotide sequence ID" value="NC_010528.1"/>
</dbReference>
<dbReference type="SMR" id="B2AGT3"/>
<dbReference type="GeneID" id="29762327"/>
<dbReference type="KEGG" id="cti:RALTA_A0312"/>
<dbReference type="eggNOG" id="COG0669">
    <property type="taxonomic scope" value="Bacteria"/>
</dbReference>
<dbReference type="HOGENOM" id="CLU_100149_0_1_4"/>
<dbReference type="BioCyc" id="CTAI977880:RALTA_RS01520-MONOMER"/>
<dbReference type="UniPathway" id="UPA00241">
    <property type="reaction ID" value="UER00355"/>
</dbReference>
<dbReference type="Proteomes" id="UP000001692">
    <property type="component" value="Chromosome 1"/>
</dbReference>
<dbReference type="GO" id="GO:0005737">
    <property type="term" value="C:cytoplasm"/>
    <property type="evidence" value="ECO:0007669"/>
    <property type="project" value="UniProtKB-SubCell"/>
</dbReference>
<dbReference type="GO" id="GO:0005524">
    <property type="term" value="F:ATP binding"/>
    <property type="evidence" value="ECO:0007669"/>
    <property type="project" value="UniProtKB-KW"/>
</dbReference>
<dbReference type="GO" id="GO:0004595">
    <property type="term" value="F:pantetheine-phosphate adenylyltransferase activity"/>
    <property type="evidence" value="ECO:0007669"/>
    <property type="project" value="UniProtKB-UniRule"/>
</dbReference>
<dbReference type="GO" id="GO:0015937">
    <property type="term" value="P:coenzyme A biosynthetic process"/>
    <property type="evidence" value="ECO:0007669"/>
    <property type="project" value="UniProtKB-UniRule"/>
</dbReference>
<dbReference type="CDD" id="cd02163">
    <property type="entry name" value="PPAT"/>
    <property type="match status" value="1"/>
</dbReference>
<dbReference type="Gene3D" id="3.40.50.620">
    <property type="entry name" value="HUPs"/>
    <property type="match status" value="1"/>
</dbReference>
<dbReference type="HAMAP" id="MF_00151">
    <property type="entry name" value="PPAT_bact"/>
    <property type="match status" value="1"/>
</dbReference>
<dbReference type="InterPro" id="IPR004821">
    <property type="entry name" value="Cyt_trans-like"/>
</dbReference>
<dbReference type="InterPro" id="IPR001980">
    <property type="entry name" value="PPAT"/>
</dbReference>
<dbReference type="InterPro" id="IPR014729">
    <property type="entry name" value="Rossmann-like_a/b/a_fold"/>
</dbReference>
<dbReference type="NCBIfam" id="TIGR01510">
    <property type="entry name" value="coaD_prev_kdtB"/>
    <property type="match status" value="1"/>
</dbReference>
<dbReference type="NCBIfam" id="TIGR00125">
    <property type="entry name" value="cyt_tran_rel"/>
    <property type="match status" value="1"/>
</dbReference>
<dbReference type="PANTHER" id="PTHR21342">
    <property type="entry name" value="PHOSPHOPANTETHEINE ADENYLYLTRANSFERASE"/>
    <property type="match status" value="1"/>
</dbReference>
<dbReference type="PANTHER" id="PTHR21342:SF1">
    <property type="entry name" value="PHOSPHOPANTETHEINE ADENYLYLTRANSFERASE"/>
    <property type="match status" value="1"/>
</dbReference>
<dbReference type="Pfam" id="PF01467">
    <property type="entry name" value="CTP_transf_like"/>
    <property type="match status" value="1"/>
</dbReference>
<dbReference type="PRINTS" id="PR01020">
    <property type="entry name" value="LPSBIOSNTHSS"/>
</dbReference>
<dbReference type="SUPFAM" id="SSF52374">
    <property type="entry name" value="Nucleotidylyl transferase"/>
    <property type="match status" value="1"/>
</dbReference>
<evidence type="ECO:0000255" key="1">
    <source>
        <dbReference type="HAMAP-Rule" id="MF_00151"/>
    </source>
</evidence>
<reference key="1">
    <citation type="journal article" date="2008" name="Genome Res.">
        <title>Genome sequence of the beta-rhizobium Cupriavidus taiwanensis and comparative genomics of rhizobia.</title>
        <authorList>
            <person name="Amadou C."/>
            <person name="Pascal G."/>
            <person name="Mangenot S."/>
            <person name="Glew M."/>
            <person name="Bontemps C."/>
            <person name="Capela D."/>
            <person name="Carrere S."/>
            <person name="Cruveiller S."/>
            <person name="Dossat C."/>
            <person name="Lajus A."/>
            <person name="Marchetti M."/>
            <person name="Poinsot V."/>
            <person name="Rouy Z."/>
            <person name="Servin B."/>
            <person name="Saad M."/>
            <person name="Schenowitz C."/>
            <person name="Barbe V."/>
            <person name="Batut J."/>
            <person name="Medigue C."/>
            <person name="Masson-Boivin C."/>
        </authorList>
    </citation>
    <scope>NUCLEOTIDE SEQUENCE [LARGE SCALE GENOMIC DNA]</scope>
    <source>
        <strain>DSM 17343 / BCRC 17206 / CCUG 44338 / CIP 107171 / LMG 19424 / R1</strain>
    </source>
</reference>
<accession>B2AGT3</accession>
<keyword id="KW-0067">ATP-binding</keyword>
<keyword id="KW-0173">Coenzyme A biosynthesis</keyword>
<keyword id="KW-0963">Cytoplasm</keyword>
<keyword id="KW-0460">Magnesium</keyword>
<keyword id="KW-0547">Nucleotide-binding</keyword>
<keyword id="KW-0548">Nucleotidyltransferase</keyword>
<keyword id="KW-0808">Transferase</keyword>
<name>COAD_CUPTR</name>